<keyword id="KW-1185">Reference proteome</keyword>
<feature type="chain" id="PRO_0000451761" description="Protein edg-1">
    <location>
        <begin position="1"/>
        <end position="727"/>
    </location>
</feature>
<feature type="region of interest" description="Disordered" evidence="1">
    <location>
        <begin position="703"/>
        <end position="727"/>
    </location>
</feature>
<sequence length="727" mass="84192">MVENKSSYELPDQKTLDMNKEWVQELEDIFYSYKKYDVNKVRVQQFLDRRSDFLVYDFYTSNLSMDAMQYFQAGVTQKDVGLSKDYILLMRKLYSMLTEPSKQFFQEQFVKEWQYHEIDYTPYFETLVPRFREKIARLLDEIVKNPEEVDDDVQEELRWHLLFSPVTTLLDIFTRCLKNFEITGFCLNVCLKVPQLFFDRPLKIYHTEYETDRVESLMALVFRRLIFNKRWVDTSDEEWSNLEQLARVICSGQEPSLMSAWPLLEVVLCELYTQNRTPMISVEVLSEIAVKIVENFDNLKYATSARTKPAENVLLTPSIICFLLNIIVDENVSNTVIENCKMILKAIGQNMEQPFDAEAKSYLTSKVLKEFPWTLEFAISTWFKALEVEKRRIPSAVYKAINAEMKETFDERTFDIEESETVDQSINEEDEERCSTLSSESSVKTAISIDHKSDTAVDNLEMNQLHLSPKPKASVEAVKSCKPAFVAVIFEEIPPETDQNISVFEDPTIEVLTEYLDCIITMGVFDISCADELMRHSSVTFESSEQLEKVMKTAFEENFEIANAGPQRIKEISGKILEVFGSTSSESDHDRIASSIIELIPTEEYEKTGPRWSHDIKKSEIIQPLVIPVEATLESWPPAEYRYVAPGIKESRDSARHERLLRQQLATTKSLEMAQLHRDLWAENEKNMEHWTRPASPCNSSFFAESSVKPTTSSAYGNSSNFSRYAD</sequence>
<comment type="function">
    <text evidence="2">Plays a role in regulating deps-1 cluster formation in the germline.</text>
</comment>
<comment type="subunit">
    <text evidence="2">May interact with deps-1 and prg-1.</text>
</comment>
<comment type="interaction">
    <interactant intactId="EBI-323809">
        <id>Q17436</id>
    </interactant>
    <interactant intactId="EBI-327302">
        <id>Q9XXL3</id>
        <label>ssp-31</label>
    </interactant>
    <organismsDiffer>false</organismsDiffer>
    <experiments>4</experiments>
</comment>
<comment type="subcellular location">
    <subcellularLocation>
        <location evidence="4">Cytoplasmic granule</location>
    </subcellularLocation>
</comment>
<comment type="disruption phenotype">
    <text evidence="2">RNAi-mediated knockdown results in enlarged deps-1-containing clusters.</text>
</comment>
<organism evidence="5">
    <name type="scientific">Caenorhabditis elegans</name>
    <dbReference type="NCBI Taxonomy" id="6239"/>
    <lineage>
        <taxon>Eukaryota</taxon>
        <taxon>Metazoa</taxon>
        <taxon>Ecdysozoa</taxon>
        <taxon>Nematoda</taxon>
        <taxon>Chromadorea</taxon>
        <taxon>Rhabditida</taxon>
        <taxon>Rhabditina</taxon>
        <taxon>Rhabditomorpha</taxon>
        <taxon>Rhabditoidea</taxon>
        <taxon>Rhabditidae</taxon>
        <taxon>Peloderinae</taxon>
        <taxon>Caenorhabditis</taxon>
    </lineage>
</organism>
<name>EDG1_CAEEL</name>
<gene>
    <name evidence="6" type="primary">edg-1</name>
    <name evidence="6" type="ORF">B0035.6</name>
</gene>
<protein>
    <recommendedName>
        <fullName evidence="3">Protein edg-1</fullName>
    </recommendedName>
    <alternativeName>
        <fullName evidence="6">Enlarged deps-1 granule 1</fullName>
    </alternativeName>
</protein>
<reference key="1">
    <citation type="journal article" date="1998" name="Science">
        <title>Genome sequence of the nematode C. elegans: a platform for investigating biology.</title>
        <authorList>
            <consortium name="The C. elegans sequencing consortium"/>
        </authorList>
    </citation>
    <scope>NUCLEOTIDE SEQUENCE [LARGE SCALE GENOMIC DNA]</scope>
    <source>
        <strain evidence="5">Bristol N2</strain>
    </source>
</reference>
<reference key="2">
    <citation type="journal article" date="2020" name="Nat. Commun.">
        <title>DEPS-1 is required for piRNA-dependent silencing and PIWI condensate organisation in Caenorhabditis elegans.</title>
        <authorList>
            <person name="Suen K.M."/>
            <person name="Braukmann F."/>
            <person name="Butler R."/>
            <person name="Bensaddek D."/>
            <person name="Akay A."/>
            <person name="Lin C.C."/>
            <person name="Milonaityte D."/>
            <person name="Doshi N."/>
            <person name="Sapetschnig A."/>
            <person name="Lamond A."/>
            <person name="Ladbury J.E."/>
            <person name="Miska E.A."/>
        </authorList>
    </citation>
    <scope>FUNCTION</scope>
    <scope>INTERACTION WITH DEPS-1 AND PRG-1</scope>
    <scope>SUBCELLULAR LOCATION</scope>
    <scope>DISRUPTION PHENOTYPE</scope>
</reference>
<evidence type="ECO:0000256" key="1">
    <source>
        <dbReference type="SAM" id="MobiDB-lite"/>
    </source>
</evidence>
<evidence type="ECO:0000269" key="2">
    <source>
    </source>
</evidence>
<evidence type="ECO:0000305" key="3"/>
<evidence type="ECO:0000305" key="4">
    <source>
    </source>
</evidence>
<evidence type="ECO:0000312" key="5">
    <source>
        <dbReference type="Proteomes" id="UP000001940"/>
    </source>
</evidence>
<evidence type="ECO:0000312" key="6">
    <source>
        <dbReference type="WormBase" id="B0035.6"/>
    </source>
</evidence>
<accession>Q17436</accession>
<dbReference type="EMBL" id="BX284604">
    <property type="protein sequence ID" value="CAA97420.1"/>
    <property type="molecule type" value="Genomic_DNA"/>
</dbReference>
<dbReference type="PIR" id="T18665">
    <property type="entry name" value="T18665"/>
</dbReference>
<dbReference type="RefSeq" id="NP_502130.1">
    <property type="nucleotide sequence ID" value="NM_069729.8"/>
</dbReference>
<dbReference type="DIP" id="DIP-25751N"/>
<dbReference type="FunCoup" id="Q17436">
    <property type="interactions" value="1354"/>
</dbReference>
<dbReference type="IntAct" id="Q17436">
    <property type="interactions" value="2"/>
</dbReference>
<dbReference type="STRING" id="6239.B0035.6.1"/>
<dbReference type="PaxDb" id="6239-B0035.6"/>
<dbReference type="PeptideAtlas" id="Q17436"/>
<dbReference type="EnsemblMetazoa" id="B0035.6.1">
    <property type="protein sequence ID" value="B0035.6.1"/>
    <property type="gene ID" value="WBGene00007109"/>
</dbReference>
<dbReference type="GeneID" id="178047"/>
<dbReference type="KEGG" id="cel:CELE_B0035.6"/>
<dbReference type="UCSC" id="B0035.6">
    <property type="organism name" value="c. elegans"/>
</dbReference>
<dbReference type="AGR" id="WB:WBGene00007109"/>
<dbReference type="CTD" id="178047"/>
<dbReference type="WormBase" id="B0035.6">
    <property type="protein sequence ID" value="CE20443"/>
    <property type="gene ID" value="WBGene00007109"/>
    <property type="gene designation" value="edg-1"/>
</dbReference>
<dbReference type="eggNOG" id="ENOG502RT6K">
    <property type="taxonomic scope" value="Eukaryota"/>
</dbReference>
<dbReference type="GeneTree" id="ENSGT00970000196217"/>
<dbReference type="HOGENOM" id="CLU_380938_0_0_1"/>
<dbReference type="InParanoid" id="Q17436"/>
<dbReference type="OMA" id="VKEWQYY"/>
<dbReference type="OrthoDB" id="5872500at2759"/>
<dbReference type="PhylomeDB" id="Q17436"/>
<dbReference type="CD-CODE" id="73A75392">
    <property type="entry name" value="P-granule"/>
</dbReference>
<dbReference type="PRO" id="PR:Q17436"/>
<dbReference type="Proteomes" id="UP000001940">
    <property type="component" value="Chromosome IV"/>
</dbReference>
<dbReference type="Bgee" id="WBGene00007109">
    <property type="expression patterns" value="Expressed in germ line (C elegans) and 4 other cell types or tissues"/>
</dbReference>
<dbReference type="InterPro" id="IPR056581">
    <property type="entry name" value="TPR_Edg1"/>
</dbReference>
<dbReference type="Pfam" id="PF24293">
    <property type="entry name" value="TPR_Edg1"/>
    <property type="match status" value="1"/>
</dbReference>
<proteinExistence type="evidence at protein level"/>